<sequence>MQGILSIQSHVSFGHAGNSSAVFPMQRMGFEVWPIHTVQFSNHTQYQEGWTGRAFAAEDISELVRGLGNIGALEKCQAVLTGYQGSAEQCLAVEDTVAKVKQANPNALYVCDPVMGAPDKGCIVAPGIAENLLTRLMPMADVIVPNQFELSQFAEMEIHSLDDAITACQRALAKGPKVVLVKHLYCLENGSFNMLLATQEGIYLAKRPQFEFAKQPVGVGDLISAIFTSGLLKGWSPKQAFQHCHDACYGVLSATYHAGEWELQTIAAQQEFVEPSKHFPIEEVELEMA</sequence>
<organism>
    <name type="scientific">Vibrio parahaemolyticus serotype O3:K6 (strain RIMD 2210633)</name>
    <dbReference type="NCBI Taxonomy" id="223926"/>
    <lineage>
        <taxon>Bacteria</taxon>
        <taxon>Pseudomonadati</taxon>
        <taxon>Pseudomonadota</taxon>
        <taxon>Gammaproteobacteria</taxon>
        <taxon>Vibrionales</taxon>
        <taxon>Vibrionaceae</taxon>
        <taxon>Vibrio</taxon>
    </lineage>
</organism>
<evidence type="ECO:0000255" key="1">
    <source>
        <dbReference type="HAMAP-Rule" id="MF_01639"/>
    </source>
</evidence>
<keyword id="KW-0067">ATP-binding</keyword>
<keyword id="KW-0418">Kinase</keyword>
<keyword id="KW-0460">Magnesium</keyword>
<keyword id="KW-0547">Nucleotide-binding</keyword>
<keyword id="KW-0808">Transferase</keyword>
<feature type="chain" id="PRO_0000269835" description="Pyridoxal kinase PdxY">
    <location>
        <begin position="1"/>
        <end position="289"/>
    </location>
</feature>
<feature type="binding site" evidence="1">
    <location>
        <position position="9"/>
    </location>
    <ligand>
        <name>substrate</name>
    </ligand>
</feature>
<feature type="binding site" evidence="1">
    <location>
        <begin position="44"/>
        <end position="45"/>
    </location>
    <ligand>
        <name>substrate</name>
    </ligand>
</feature>
<feature type="binding site" evidence="1">
    <location>
        <position position="112"/>
    </location>
    <ligand>
        <name>ATP</name>
        <dbReference type="ChEBI" id="CHEBI:30616"/>
    </ligand>
</feature>
<feature type="binding site" evidence="1">
    <location>
        <position position="144"/>
    </location>
    <ligand>
        <name>ATP</name>
        <dbReference type="ChEBI" id="CHEBI:30616"/>
    </ligand>
</feature>
<feature type="binding site" evidence="1">
    <location>
        <position position="149"/>
    </location>
    <ligand>
        <name>ATP</name>
        <dbReference type="ChEBI" id="CHEBI:30616"/>
    </ligand>
</feature>
<feature type="binding site" evidence="1">
    <location>
        <position position="182"/>
    </location>
    <ligand>
        <name>ATP</name>
        <dbReference type="ChEBI" id="CHEBI:30616"/>
    </ligand>
</feature>
<feature type="binding site" evidence="1">
    <location>
        <position position="221"/>
    </location>
    <ligand>
        <name>substrate</name>
    </ligand>
</feature>
<proteinExistence type="inferred from homology"/>
<protein>
    <recommendedName>
        <fullName evidence="1">Pyridoxal kinase PdxY</fullName>
        <shortName evidence="1">PL kinase</shortName>
        <ecNumber evidence="1">2.7.1.35</ecNumber>
    </recommendedName>
</protein>
<reference key="1">
    <citation type="journal article" date="2003" name="Lancet">
        <title>Genome sequence of Vibrio parahaemolyticus: a pathogenic mechanism distinct from that of V. cholerae.</title>
        <authorList>
            <person name="Makino K."/>
            <person name="Oshima K."/>
            <person name="Kurokawa K."/>
            <person name="Yokoyama K."/>
            <person name="Uda T."/>
            <person name="Tagomori K."/>
            <person name="Iijima Y."/>
            <person name="Najima M."/>
            <person name="Nakano M."/>
            <person name="Yamashita A."/>
            <person name="Kubota Y."/>
            <person name="Kimura S."/>
            <person name="Yasunaga T."/>
            <person name="Honda T."/>
            <person name="Shinagawa H."/>
            <person name="Hattori M."/>
            <person name="Iida T."/>
        </authorList>
    </citation>
    <scope>NUCLEOTIDE SEQUENCE [LARGE SCALE GENOMIC DNA]</scope>
    <source>
        <strain>RIMD 2210633</strain>
    </source>
</reference>
<accession>Q87FP6</accession>
<comment type="function">
    <text evidence="1">Pyridoxal kinase involved in the salvage pathway of pyridoxal 5'-phosphate (PLP). Catalyzes the phosphorylation of pyridoxal to PLP.</text>
</comment>
<comment type="catalytic activity">
    <reaction evidence="1">
        <text>pyridoxal + ATP = pyridoxal 5'-phosphate + ADP + H(+)</text>
        <dbReference type="Rhea" id="RHEA:10224"/>
        <dbReference type="ChEBI" id="CHEBI:15378"/>
        <dbReference type="ChEBI" id="CHEBI:17310"/>
        <dbReference type="ChEBI" id="CHEBI:30616"/>
        <dbReference type="ChEBI" id="CHEBI:456216"/>
        <dbReference type="ChEBI" id="CHEBI:597326"/>
        <dbReference type="EC" id="2.7.1.35"/>
    </reaction>
</comment>
<comment type="cofactor">
    <cofactor evidence="1">
        <name>Mg(2+)</name>
        <dbReference type="ChEBI" id="CHEBI:18420"/>
    </cofactor>
</comment>
<comment type="pathway">
    <text evidence="1">Cofactor metabolism; pyridoxal 5'-phosphate salvage; pyridoxal 5'-phosphate from pyridoxal: step 1/1.</text>
</comment>
<comment type="subunit">
    <text evidence="1">Homodimer.</text>
</comment>
<comment type="similarity">
    <text evidence="1">Belongs to the pyridoxine kinase family. PdxY subfamily.</text>
</comment>
<gene>
    <name evidence="1" type="primary">pdxY</name>
    <name type="ordered locus">VPA1632</name>
</gene>
<dbReference type="EC" id="2.7.1.35" evidence="1"/>
<dbReference type="EMBL" id="BA000032">
    <property type="protein sequence ID" value="BAC62975.1"/>
    <property type="molecule type" value="Genomic_DNA"/>
</dbReference>
<dbReference type="RefSeq" id="NP_801142.1">
    <property type="nucleotide sequence ID" value="NC_004605.1"/>
</dbReference>
<dbReference type="RefSeq" id="WP_005458347.1">
    <property type="nucleotide sequence ID" value="NC_004605.1"/>
</dbReference>
<dbReference type="SMR" id="Q87FP6"/>
<dbReference type="GeneID" id="1192328"/>
<dbReference type="KEGG" id="vpa:VPA1632"/>
<dbReference type="PATRIC" id="fig|223926.6.peg.4552"/>
<dbReference type="eggNOG" id="COG2240">
    <property type="taxonomic scope" value="Bacteria"/>
</dbReference>
<dbReference type="HOGENOM" id="CLU_046496_3_0_6"/>
<dbReference type="UniPathway" id="UPA01068">
    <property type="reaction ID" value="UER00298"/>
</dbReference>
<dbReference type="Proteomes" id="UP000002493">
    <property type="component" value="Chromosome 2"/>
</dbReference>
<dbReference type="GO" id="GO:0005829">
    <property type="term" value="C:cytosol"/>
    <property type="evidence" value="ECO:0007669"/>
    <property type="project" value="TreeGrafter"/>
</dbReference>
<dbReference type="GO" id="GO:0005524">
    <property type="term" value="F:ATP binding"/>
    <property type="evidence" value="ECO:0007669"/>
    <property type="project" value="UniProtKB-UniRule"/>
</dbReference>
<dbReference type="GO" id="GO:0000287">
    <property type="term" value="F:magnesium ion binding"/>
    <property type="evidence" value="ECO:0007669"/>
    <property type="project" value="UniProtKB-UniRule"/>
</dbReference>
<dbReference type="GO" id="GO:0008478">
    <property type="term" value="F:pyridoxal kinase activity"/>
    <property type="evidence" value="ECO:0007669"/>
    <property type="project" value="UniProtKB-UniRule"/>
</dbReference>
<dbReference type="GO" id="GO:0009443">
    <property type="term" value="P:pyridoxal 5'-phosphate salvage"/>
    <property type="evidence" value="ECO:0007669"/>
    <property type="project" value="UniProtKB-UniRule"/>
</dbReference>
<dbReference type="CDD" id="cd01173">
    <property type="entry name" value="pyridoxal_pyridoxamine_kinase"/>
    <property type="match status" value="1"/>
</dbReference>
<dbReference type="Gene3D" id="3.40.1190.20">
    <property type="match status" value="1"/>
</dbReference>
<dbReference type="HAMAP" id="MF_01639">
    <property type="entry name" value="PdxY"/>
    <property type="match status" value="1"/>
</dbReference>
<dbReference type="InterPro" id="IPR013749">
    <property type="entry name" value="PM/HMP-P_kinase-1"/>
</dbReference>
<dbReference type="InterPro" id="IPR004625">
    <property type="entry name" value="PyrdxlKinase"/>
</dbReference>
<dbReference type="InterPro" id="IPR023685">
    <property type="entry name" value="Pyridoxal_kinase_PdxY"/>
</dbReference>
<dbReference type="InterPro" id="IPR029056">
    <property type="entry name" value="Ribokinase-like"/>
</dbReference>
<dbReference type="NCBIfam" id="NF004398">
    <property type="entry name" value="PRK05756.1"/>
    <property type="match status" value="1"/>
</dbReference>
<dbReference type="NCBIfam" id="TIGR00687">
    <property type="entry name" value="pyridox_kin"/>
    <property type="match status" value="1"/>
</dbReference>
<dbReference type="PANTHER" id="PTHR10534">
    <property type="entry name" value="PYRIDOXAL KINASE"/>
    <property type="match status" value="1"/>
</dbReference>
<dbReference type="PANTHER" id="PTHR10534:SF2">
    <property type="entry name" value="PYRIDOXAL KINASE"/>
    <property type="match status" value="1"/>
</dbReference>
<dbReference type="Pfam" id="PF08543">
    <property type="entry name" value="Phos_pyr_kin"/>
    <property type="match status" value="1"/>
</dbReference>
<dbReference type="SUPFAM" id="SSF53613">
    <property type="entry name" value="Ribokinase-like"/>
    <property type="match status" value="1"/>
</dbReference>
<name>PDXY_VIBPA</name>